<proteinExistence type="inferred from homology"/>
<comment type="subunit">
    <text evidence="1">Part of the 50S ribosomal subunit.</text>
</comment>
<comment type="similarity">
    <text evidence="1">Belongs to the universal ribosomal protein uL30 family.</text>
</comment>
<accession>C3LJA0</accession>
<evidence type="ECO:0000255" key="1">
    <source>
        <dbReference type="HAMAP-Rule" id="MF_01371"/>
    </source>
</evidence>
<evidence type="ECO:0000305" key="2"/>
<sequence>MAKKLEITLTRSVIGRPQDQRATVEALGLKKLNSTVVKEETPAILGMINKVSHLVTVKEA</sequence>
<gene>
    <name evidence="1" type="primary">rpmD</name>
    <name type="ordered locus">BAMEG_0144</name>
</gene>
<reference key="1">
    <citation type="submission" date="2008-10" db="EMBL/GenBank/DDBJ databases">
        <title>Genome sequence of Bacillus anthracis str. CDC 684.</title>
        <authorList>
            <person name="Dodson R.J."/>
            <person name="Munk A.C."/>
            <person name="Brettin T."/>
            <person name="Bruce D."/>
            <person name="Detter C."/>
            <person name="Tapia R."/>
            <person name="Han C."/>
            <person name="Sutton G."/>
            <person name="Sims D."/>
        </authorList>
    </citation>
    <scope>NUCLEOTIDE SEQUENCE [LARGE SCALE GENOMIC DNA]</scope>
    <source>
        <strain>CDC 684 / NRRL 3495</strain>
    </source>
</reference>
<feature type="chain" id="PRO_1000184123" description="Large ribosomal subunit protein uL30">
    <location>
        <begin position="1"/>
        <end position="60"/>
    </location>
</feature>
<protein>
    <recommendedName>
        <fullName evidence="1">Large ribosomal subunit protein uL30</fullName>
    </recommendedName>
    <alternativeName>
        <fullName evidence="2">50S ribosomal protein L30</fullName>
    </alternativeName>
</protein>
<dbReference type="EMBL" id="CP001215">
    <property type="protein sequence ID" value="ACP13728.1"/>
    <property type="molecule type" value="Genomic_DNA"/>
</dbReference>
<dbReference type="RefSeq" id="WP_001085234.1">
    <property type="nucleotide sequence ID" value="NC_012581.1"/>
</dbReference>
<dbReference type="SMR" id="C3LJA0"/>
<dbReference type="GeneID" id="93010925"/>
<dbReference type="KEGG" id="bah:BAMEG_0144"/>
<dbReference type="HOGENOM" id="CLU_131047_2_1_9"/>
<dbReference type="GO" id="GO:0022625">
    <property type="term" value="C:cytosolic large ribosomal subunit"/>
    <property type="evidence" value="ECO:0007669"/>
    <property type="project" value="TreeGrafter"/>
</dbReference>
<dbReference type="GO" id="GO:0003735">
    <property type="term" value="F:structural constituent of ribosome"/>
    <property type="evidence" value="ECO:0007669"/>
    <property type="project" value="InterPro"/>
</dbReference>
<dbReference type="GO" id="GO:0006412">
    <property type="term" value="P:translation"/>
    <property type="evidence" value="ECO:0007669"/>
    <property type="project" value="UniProtKB-UniRule"/>
</dbReference>
<dbReference type="CDD" id="cd01658">
    <property type="entry name" value="Ribosomal_L30"/>
    <property type="match status" value="1"/>
</dbReference>
<dbReference type="FunFam" id="3.30.1390.20:FF:000001">
    <property type="entry name" value="50S ribosomal protein L30"/>
    <property type="match status" value="1"/>
</dbReference>
<dbReference type="Gene3D" id="3.30.1390.20">
    <property type="entry name" value="Ribosomal protein L30, ferredoxin-like fold domain"/>
    <property type="match status" value="1"/>
</dbReference>
<dbReference type="HAMAP" id="MF_01371_B">
    <property type="entry name" value="Ribosomal_uL30_B"/>
    <property type="match status" value="1"/>
</dbReference>
<dbReference type="InterPro" id="IPR036919">
    <property type="entry name" value="Ribo_uL30_ferredoxin-like_sf"/>
</dbReference>
<dbReference type="InterPro" id="IPR005996">
    <property type="entry name" value="Ribosomal_uL30_bac-type"/>
</dbReference>
<dbReference type="InterPro" id="IPR018038">
    <property type="entry name" value="Ribosomal_uL30_CS"/>
</dbReference>
<dbReference type="InterPro" id="IPR016082">
    <property type="entry name" value="Ribosomal_uL30_ferredoxin-like"/>
</dbReference>
<dbReference type="NCBIfam" id="TIGR01308">
    <property type="entry name" value="rpmD_bact"/>
    <property type="match status" value="1"/>
</dbReference>
<dbReference type="PANTHER" id="PTHR15892:SF2">
    <property type="entry name" value="LARGE RIBOSOMAL SUBUNIT PROTEIN UL30M"/>
    <property type="match status" value="1"/>
</dbReference>
<dbReference type="PANTHER" id="PTHR15892">
    <property type="entry name" value="MITOCHONDRIAL RIBOSOMAL PROTEIN L30"/>
    <property type="match status" value="1"/>
</dbReference>
<dbReference type="Pfam" id="PF00327">
    <property type="entry name" value="Ribosomal_L30"/>
    <property type="match status" value="1"/>
</dbReference>
<dbReference type="PIRSF" id="PIRSF002211">
    <property type="entry name" value="Ribosomal_L30_bac-type"/>
    <property type="match status" value="1"/>
</dbReference>
<dbReference type="SUPFAM" id="SSF55129">
    <property type="entry name" value="Ribosomal protein L30p/L7e"/>
    <property type="match status" value="1"/>
</dbReference>
<dbReference type="PROSITE" id="PS00634">
    <property type="entry name" value="RIBOSOMAL_L30"/>
    <property type="match status" value="1"/>
</dbReference>
<organism>
    <name type="scientific">Bacillus anthracis (strain CDC 684 / NRRL 3495)</name>
    <dbReference type="NCBI Taxonomy" id="568206"/>
    <lineage>
        <taxon>Bacteria</taxon>
        <taxon>Bacillati</taxon>
        <taxon>Bacillota</taxon>
        <taxon>Bacilli</taxon>
        <taxon>Bacillales</taxon>
        <taxon>Bacillaceae</taxon>
        <taxon>Bacillus</taxon>
        <taxon>Bacillus cereus group</taxon>
    </lineage>
</organism>
<keyword id="KW-0687">Ribonucleoprotein</keyword>
<keyword id="KW-0689">Ribosomal protein</keyword>
<name>RL30_BACAC</name>